<evidence type="ECO:0000250" key="1">
    <source>
        <dbReference type="UniProtKB" id="A0A5K1K8H0"/>
    </source>
</evidence>
<evidence type="ECO:0000250" key="2">
    <source>
        <dbReference type="UniProtKB" id="Q8IBS5"/>
    </source>
</evidence>
<evidence type="ECO:0000255" key="3">
    <source>
        <dbReference type="PROSITE-ProRule" id="PRU00159"/>
    </source>
</evidence>
<evidence type="ECO:0000255" key="4">
    <source>
        <dbReference type="PROSITE-ProRule" id="PRU00448"/>
    </source>
</evidence>
<evidence type="ECO:0000255" key="5">
    <source>
        <dbReference type="PROSITE-ProRule" id="PRU10027"/>
    </source>
</evidence>
<evidence type="ECO:0000269" key="6">
    <source>
    </source>
</evidence>
<evidence type="ECO:0000303" key="7">
    <source>
    </source>
</evidence>
<evidence type="ECO:0000305" key="8"/>
<evidence type="ECO:0000312" key="9">
    <source>
        <dbReference type="EMBL" id="VUC57902.1"/>
    </source>
</evidence>
<evidence type="ECO:0000312" key="10">
    <source>
        <dbReference type="Proteomes" id="UP000074855"/>
    </source>
</evidence>
<protein>
    <recommendedName>
        <fullName evidence="7">Calcium-dependent protein kinase 5</fullName>
        <ecNumber evidence="1">2.7.11.1</ecNumber>
    </recommendedName>
    <alternativeName>
        <fullName evidence="7">PbCDPK5</fullName>
    </alternativeName>
</protein>
<feature type="chain" id="PRO_0000452846" description="Calcium-dependent protein kinase 5">
    <location>
        <begin position="1"/>
        <end position="562"/>
    </location>
</feature>
<feature type="domain" description="Protein kinase" evidence="3">
    <location>
        <begin position="118"/>
        <end position="372"/>
    </location>
</feature>
<feature type="domain" description="EF-hand 1" evidence="4">
    <location>
        <begin position="419"/>
        <end position="453"/>
    </location>
</feature>
<feature type="domain" description="EF-hand 2" evidence="4">
    <location>
        <begin position="454"/>
        <end position="489"/>
    </location>
</feature>
<feature type="domain" description="EF-hand 3" evidence="4">
    <location>
        <begin position="490"/>
        <end position="525"/>
    </location>
</feature>
<feature type="domain" description="EF-hand 4" evidence="4">
    <location>
        <begin position="528"/>
        <end position="562"/>
    </location>
</feature>
<feature type="region of interest" description="J domain" evidence="2">
    <location>
        <begin position="394"/>
        <end position="429"/>
    </location>
</feature>
<feature type="short sequence motif" description="J domain autoinhibitory motif" evidence="2">
    <location>
        <begin position="394"/>
        <end position="402"/>
    </location>
</feature>
<feature type="short sequence motif" description="J domain EF-hand interaction motif" evidence="2">
    <location>
        <begin position="403"/>
        <end position="412"/>
    </location>
</feature>
<feature type="active site" description="Proton acceptor" evidence="5">
    <location>
        <position position="238"/>
    </location>
</feature>
<feature type="binding site" evidence="3">
    <location>
        <begin position="124"/>
        <end position="132"/>
    </location>
    <ligand>
        <name>ATP</name>
        <dbReference type="ChEBI" id="CHEBI:30616"/>
    </ligand>
</feature>
<feature type="binding site" evidence="3">
    <location>
        <position position="147"/>
    </location>
    <ligand>
        <name>ATP</name>
        <dbReference type="ChEBI" id="CHEBI:30616"/>
    </ligand>
</feature>
<feature type="binding site" evidence="4">
    <location>
        <position position="432"/>
    </location>
    <ligand>
        <name>Ca(2+)</name>
        <dbReference type="ChEBI" id="CHEBI:29108"/>
        <label>1</label>
    </ligand>
</feature>
<feature type="binding site" evidence="4">
    <location>
        <position position="434"/>
    </location>
    <ligand>
        <name>Ca(2+)</name>
        <dbReference type="ChEBI" id="CHEBI:29108"/>
        <label>1</label>
    </ligand>
</feature>
<feature type="binding site" evidence="4">
    <location>
        <position position="436"/>
    </location>
    <ligand>
        <name>Ca(2+)</name>
        <dbReference type="ChEBI" id="CHEBI:29108"/>
        <label>1</label>
    </ligand>
</feature>
<feature type="binding site" evidence="4">
    <location>
        <position position="443"/>
    </location>
    <ligand>
        <name>Ca(2+)</name>
        <dbReference type="ChEBI" id="CHEBI:29108"/>
        <label>1</label>
    </ligand>
</feature>
<feature type="binding site" evidence="4">
    <location>
        <position position="467"/>
    </location>
    <ligand>
        <name>Ca(2+)</name>
        <dbReference type="ChEBI" id="CHEBI:29108"/>
        <label>2</label>
    </ligand>
</feature>
<feature type="binding site" evidence="4">
    <location>
        <position position="469"/>
    </location>
    <ligand>
        <name>Ca(2+)</name>
        <dbReference type="ChEBI" id="CHEBI:29108"/>
        <label>2</label>
    </ligand>
</feature>
<feature type="binding site" evidence="4">
    <location>
        <position position="471"/>
    </location>
    <ligand>
        <name>Ca(2+)</name>
        <dbReference type="ChEBI" id="CHEBI:29108"/>
        <label>2</label>
    </ligand>
</feature>
<feature type="binding site" evidence="4">
    <location>
        <position position="478"/>
    </location>
    <ligand>
        <name>Ca(2+)</name>
        <dbReference type="ChEBI" id="CHEBI:29108"/>
        <label>2</label>
    </ligand>
</feature>
<feature type="binding site" evidence="4">
    <location>
        <position position="503"/>
    </location>
    <ligand>
        <name>Ca(2+)</name>
        <dbReference type="ChEBI" id="CHEBI:29108"/>
        <label>3</label>
    </ligand>
</feature>
<feature type="binding site" evidence="4">
    <location>
        <position position="505"/>
    </location>
    <ligand>
        <name>Ca(2+)</name>
        <dbReference type="ChEBI" id="CHEBI:29108"/>
        <label>3</label>
    </ligand>
</feature>
<feature type="binding site" evidence="4">
    <location>
        <position position="507"/>
    </location>
    <ligand>
        <name>Ca(2+)</name>
        <dbReference type="ChEBI" id="CHEBI:29108"/>
        <label>3</label>
    </ligand>
</feature>
<feature type="binding site" evidence="4">
    <location>
        <position position="514"/>
    </location>
    <ligand>
        <name>Ca(2+)</name>
        <dbReference type="ChEBI" id="CHEBI:29108"/>
        <label>3</label>
    </ligand>
</feature>
<feature type="binding site" evidence="4">
    <location>
        <position position="541"/>
    </location>
    <ligand>
        <name>Ca(2+)</name>
        <dbReference type="ChEBI" id="CHEBI:29108"/>
        <label>4</label>
    </ligand>
</feature>
<feature type="binding site" evidence="4">
    <location>
        <position position="543"/>
    </location>
    <ligand>
        <name>Ca(2+)</name>
        <dbReference type="ChEBI" id="CHEBI:29108"/>
        <label>4</label>
    </ligand>
</feature>
<feature type="binding site" evidence="4">
    <location>
        <position position="545"/>
    </location>
    <ligand>
        <name>Ca(2+)</name>
        <dbReference type="ChEBI" id="CHEBI:29108"/>
        <label>4</label>
    </ligand>
</feature>
<feature type="binding site" evidence="4">
    <location>
        <position position="547"/>
    </location>
    <ligand>
        <name>Ca(2+)</name>
        <dbReference type="ChEBI" id="CHEBI:29108"/>
        <label>4</label>
    </ligand>
</feature>
<feature type="binding site" evidence="4">
    <location>
        <position position="552"/>
    </location>
    <ligand>
        <name>Ca(2+)</name>
        <dbReference type="ChEBI" id="CHEBI:29108"/>
        <label>4</label>
    </ligand>
</feature>
<name>CDPK5_PLABA</name>
<gene>
    <name evidence="7" type="primary">CDPK5</name>
    <name evidence="9" type="ORF">PBANKA_1351500</name>
</gene>
<comment type="function">
    <text evidence="1 6">Calcium-dependent protein kinase which acts as a sensor and effector of intracellular Ca(2+) levels probably in part downstream of cGMP-activated PKG kinase (By similarity). Plays a central role in host erythrocytes and hepatocytes infection cycles (PubMed:32866196). During the liver stage, involved in sporozoite motility and thus in sporozoite invasion of host hepatocytes, probably together with CDPK1 and CDPK4 (PubMed:32866196). Involved in merosome egress from host hepatocytes, probably together with CDPK4 (PubMed:32866196). Required for the release of hepatic merozoites from merosomes in the host blood stream (PubMed:32866196). During the asexual blood stage, required for merozoite egress from host erythrocytes by triggering microneme secretion (By similarity). Phosphorylates transporter NPT1 at late schizont stage (By similarity).</text>
</comment>
<comment type="catalytic activity">
    <reaction evidence="1">
        <text>L-seryl-[protein] + ATP = O-phospho-L-seryl-[protein] + ADP + H(+)</text>
        <dbReference type="Rhea" id="RHEA:17989"/>
        <dbReference type="Rhea" id="RHEA-COMP:9863"/>
        <dbReference type="Rhea" id="RHEA-COMP:11604"/>
        <dbReference type="ChEBI" id="CHEBI:15378"/>
        <dbReference type="ChEBI" id="CHEBI:29999"/>
        <dbReference type="ChEBI" id="CHEBI:30616"/>
        <dbReference type="ChEBI" id="CHEBI:83421"/>
        <dbReference type="ChEBI" id="CHEBI:456216"/>
        <dbReference type="EC" id="2.7.11.1"/>
    </reaction>
</comment>
<comment type="catalytic activity">
    <reaction evidence="1">
        <text>L-threonyl-[protein] + ATP = O-phospho-L-threonyl-[protein] + ADP + H(+)</text>
        <dbReference type="Rhea" id="RHEA:46608"/>
        <dbReference type="Rhea" id="RHEA-COMP:11060"/>
        <dbReference type="Rhea" id="RHEA-COMP:11605"/>
        <dbReference type="ChEBI" id="CHEBI:15378"/>
        <dbReference type="ChEBI" id="CHEBI:30013"/>
        <dbReference type="ChEBI" id="CHEBI:30616"/>
        <dbReference type="ChEBI" id="CHEBI:61977"/>
        <dbReference type="ChEBI" id="CHEBI:456216"/>
        <dbReference type="EC" id="2.7.11.1"/>
    </reaction>
</comment>
<comment type="cofactor">
    <cofactor evidence="1">
        <name>Mg(2+)</name>
        <dbReference type="ChEBI" id="CHEBI:18420"/>
    </cofactor>
</comment>
<comment type="activity regulation">
    <text evidence="1 2">Activated by calcium (By similarity). Upon calcium binding to the EF-hand domains, the C-terminus of the junction domain (J domain) undergoes a conformational change which results in the dissociation of the pseudo-substrate inhibitory motif from the catalytic domain (By similarity). This, in turn, may facilitate the autophosphorylation of the activation loop at Thr-278, which leads to the kinase activation (By similarity).</text>
</comment>
<comment type="subcellular location">
    <subcellularLocation>
        <location evidence="1">Cytoplasm</location>
    </subcellularLocation>
    <subcellularLocation>
        <location evidence="1">Cytoplasmic vesicle</location>
        <location evidence="1">Secretory vesicle</location>
        <location evidence="1">Microneme membrane</location>
        <topology evidence="1">Peripheral membrane protein</topology>
        <orientation evidence="1">Cytoplasmic side</orientation>
    </subcellularLocation>
    <subcellularLocation>
        <location evidence="1">Cell membrane</location>
        <topology evidence="1">Peripheral membrane protein</topology>
        <orientation evidence="1">Cytoplasmic side</orientation>
    </subcellularLocation>
    <text evidence="1">During the late stages of schizogony, localizes to the cytoplasm in immature daughter merozoites, co-localizes with AMA1 to a subset of micronemes and to the apical region in maturing daughter merozoites, and near the plasma membrane in mature daughter and free merozoites.</text>
</comment>
<comment type="developmental stage">
    <text evidence="6">Expressed in sporozoites and in the late mature liver stage (at protein level) (PubMed:32866196). Expressed in the merosome, a membrane-surrounded vesicle which contains mature merozoites and produced at the end of the liver stage (at protein level) (PubMed:32866196).</text>
</comment>
<comment type="domain">
    <text evidence="2">The junction domain (J domain) is composed of 2 motifs that maintain the kinase inactive. The N-terminal autoinhibitory motif acts as a pseudosubstrate inhibiting the catalytic domain while the C-terminal motif binds the EF-hand domains.</text>
</comment>
<comment type="PTM">
    <text evidence="1">May be palmitoylated.</text>
</comment>
<comment type="PTM">
    <text evidence="1">Autophosphorylated in vitro.</text>
</comment>
<comment type="disruption phenotype">
    <text evidence="6">Sporozoite attachment to the substrate is normal but sporozoite uninterrupted circular movement is impaired (PubMed:32866196). No effect on cell traversal but reduces invasion of host hepatocytes (PubMed:32866196). Reduces merosome release from infected host hepatocytes (PubMed:32866196). Infection of mice with knockout merosomes causes a severe delay in host erythrocytes infection without affecting the asexual replication in host erythrocytes (PubMed:32866196).</text>
</comment>
<comment type="similarity">
    <text evidence="8">Belongs to the protein kinase superfamily. Ser/Thr protein kinase family. CDPK subfamily.</text>
</comment>
<organism evidence="10">
    <name type="scientific">Plasmodium berghei (strain Anka)</name>
    <dbReference type="NCBI Taxonomy" id="5823"/>
    <lineage>
        <taxon>Eukaryota</taxon>
        <taxon>Sar</taxon>
        <taxon>Alveolata</taxon>
        <taxon>Apicomplexa</taxon>
        <taxon>Aconoidasida</taxon>
        <taxon>Haemosporida</taxon>
        <taxon>Plasmodiidae</taxon>
        <taxon>Plasmodium</taxon>
        <taxon>Plasmodium (Vinckeia)</taxon>
    </lineage>
</organism>
<dbReference type="EC" id="2.7.11.1" evidence="1"/>
<dbReference type="EMBL" id="LK023128">
    <property type="protein sequence ID" value="VUC57902.1"/>
    <property type="molecule type" value="Genomic_DNA"/>
</dbReference>
<dbReference type="SMR" id="A0A509AQE6"/>
<dbReference type="FunCoup" id="A0A509AQE6">
    <property type="interactions" value="8"/>
</dbReference>
<dbReference type="STRING" id="5823.A0A509AQE6"/>
<dbReference type="VEuPathDB" id="PlasmoDB:PBANKA_1351500"/>
<dbReference type="InParanoid" id="A0A509AQE6"/>
<dbReference type="OMA" id="TCVAYQL"/>
<dbReference type="Proteomes" id="UP000074855">
    <property type="component" value="Chromosome 13"/>
</dbReference>
<dbReference type="GO" id="GO:0031410">
    <property type="term" value="C:cytoplasmic vesicle"/>
    <property type="evidence" value="ECO:0007669"/>
    <property type="project" value="UniProtKB-KW"/>
</dbReference>
<dbReference type="GO" id="GO:0033163">
    <property type="term" value="C:microneme membrane"/>
    <property type="evidence" value="ECO:0007669"/>
    <property type="project" value="UniProtKB-SubCell"/>
</dbReference>
<dbReference type="GO" id="GO:0005886">
    <property type="term" value="C:plasma membrane"/>
    <property type="evidence" value="ECO:0007669"/>
    <property type="project" value="UniProtKB-SubCell"/>
</dbReference>
<dbReference type="GO" id="GO:0005524">
    <property type="term" value="F:ATP binding"/>
    <property type="evidence" value="ECO:0007669"/>
    <property type="project" value="UniProtKB-KW"/>
</dbReference>
<dbReference type="GO" id="GO:0005509">
    <property type="term" value="F:calcium ion binding"/>
    <property type="evidence" value="ECO:0007669"/>
    <property type="project" value="InterPro"/>
</dbReference>
<dbReference type="GO" id="GO:0004674">
    <property type="term" value="F:protein serine/threonine kinase activity"/>
    <property type="evidence" value="ECO:0007669"/>
    <property type="project" value="UniProtKB-KW"/>
</dbReference>
<dbReference type="GO" id="GO:2000147">
    <property type="term" value="P:positive regulation of cell motility"/>
    <property type="evidence" value="ECO:0000315"/>
    <property type="project" value="UniProtKB"/>
</dbReference>
<dbReference type="CDD" id="cd00051">
    <property type="entry name" value="EFh"/>
    <property type="match status" value="1"/>
</dbReference>
<dbReference type="CDD" id="cd05117">
    <property type="entry name" value="STKc_CAMK"/>
    <property type="match status" value="1"/>
</dbReference>
<dbReference type="FunFam" id="3.30.200.20:FF:000315">
    <property type="entry name" value="Calcium-dependent protein kinase 3"/>
    <property type="match status" value="1"/>
</dbReference>
<dbReference type="FunFam" id="1.10.510.10:FF:000475">
    <property type="entry name" value="Calcium-dependent protein kinase 5"/>
    <property type="match status" value="1"/>
</dbReference>
<dbReference type="FunFam" id="1.10.238.10:FF:000003">
    <property type="entry name" value="Calmodulin A"/>
    <property type="match status" value="1"/>
</dbReference>
<dbReference type="Gene3D" id="1.10.238.10">
    <property type="entry name" value="EF-hand"/>
    <property type="match status" value="2"/>
</dbReference>
<dbReference type="Gene3D" id="3.30.200.20">
    <property type="entry name" value="Phosphorylase Kinase, domain 1"/>
    <property type="match status" value="1"/>
</dbReference>
<dbReference type="Gene3D" id="1.10.510.10">
    <property type="entry name" value="Transferase(Phosphotransferase) domain 1"/>
    <property type="match status" value="1"/>
</dbReference>
<dbReference type="InterPro" id="IPR050205">
    <property type="entry name" value="CDPK_Ser/Thr_kinases"/>
</dbReference>
<dbReference type="InterPro" id="IPR011992">
    <property type="entry name" value="EF-hand-dom_pair"/>
</dbReference>
<dbReference type="InterPro" id="IPR018247">
    <property type="entry name" value="EF_Hand_1_Ca_BS"/>
</dbReference>
<dbReference type="InterPro" id="IPR002048">
    <property type="entry name" value="EF_hand_dom"/>
</dbReference>
<dbReference type="InterPro" id="IPR011009">
    <property type="entry name" value="Kinase-like_dom_sf"/>
</dbReference>
<dbReference type="InterPro" id="IPR000719">
    <property type="entry name" value="Prot_kinase_dom"/>
</dbReference>
<dbReference type="InterPro" id="IPR008271">
    <property type="entry name" value="Ser/Thr_kinase_AS"/>
</dbReference>
<dbReference type="PANTHER" id="PTHR24349">
    <property type="entry name" value="SERINE/THREONINE-PROTEIN KINASE"/>
    <property type="match status" value="1"/>
</dbReference>
<dbReference type="Pfam" id="PF13499">
    <property type="entry name" value="EF-hand_7"/>
    <property type="match status" value="2"/>
</dbReference>
<dbReference type="Pfam" id="PF00069">
    <property type="entry name" value="Pkinase"/>
    <property type="match status" value="1"/>
</dbReference>
<dbReference type="SMART" id="SM00054">
    <property type="entry name" value="EFh"/>
    <property type="match status" value="4"/>
</dbReference>
<dbReference type="SMART" id="SM00220">
    <property type="entry name" value="S_TKc"/>
    <property type="match status" value="1"/>
</dbReference>
<dbReference type="SUPFAM" id="SSF47473">
    <property type="entry name" value="EF-hand"/>
    <property type="match status" value="1"/>
</dbReference>
<dbReference type="SUPFAM" id="SSF56112">
    <property type="entry name" value="Protein kinase-like (PK-like)"/>
    <property type="match status" value="1"/>
</dbReference>
<dbReference type="PROSITE" id="PS00018">
    <property type="entry name" value="EF_HAND_1"/>
    <property type="match status" value="4"/>
</dbReference>
<dbReference type="PROSITE" id="PS50222">
    <property type="entry name" value="EF_HAND_2"/>
    <property type="match status" value="4"/>
</dbReference>
<dbReference type="PROSITE" id="PS50011">
    <property type="entry name" value="PROTEIN_KINASE_DOM"/>
    <property type="match status" value="1"/>
</dbReference>
<dbReference type="PROSITE" id="PS00108">
    <property type="entry name" value="PROTEIN_KINASE_ST"/>
    <property type="match status" value="1"/>
</dbReference>
<keyword id="KW-0067">ATP-binding</keyword>
<keyword id="KW-0106">Calcium</keyword>
<keyword id="KW-1003">Cell membrane</keyword>
<keyword id="KW-0963">Cytoplasm</keyword>
<keyword id="KW-0968">Cytoplasmic vesicle</keyword>
<keyword id="KW-0418">Kinase</keyword>
<keyword id="KW-0449">Lipoprotein</keyword>
<keyword id="KW-0460">Magnesium</keyword>
<keyword id="KW-0472">Membrane</keyword>
<keyword id="KW-0479">Metal-binding</keyword>
<keyword id="KW-0547">Nucleotide-binding</keyword>
<keyword id="KW-0564">Palmitate</keyword>
<keyword id="KW-0597">Phosphoprotein</keyword>
<keyword id="KW-1185">Reference proteome</keyword>
<keyword id="KW-0677">Repeat</keyword>
<keyword id="KW-0723">Serine/threonine-protein kinase</keyword>
<keyword id="KW-0808">Transferase</keyword>
<reference evidence="10" key="1">
    <citation type="journal article" date="2014" name="BMC Biol.">
        <title>A comprehensive evaluation of rodent malaria parasite genomes and gene expression.</title>
        <authorList>
            <person name="Otto T.D."/>
            <person name="Bohme U."/>
            <person name="Jackson A.P."/>
            <person name="Hunt M."/>
            <person name="Franke-Fayard B."/>
            <person name="Hoeijmakers W.A."/>
            <person name="Religa A.A."/>
            <person name="Robertson L."/>
            <person name="Sanders M."/>
            <person name="Ogun S.A."/>
            <person name="Cunningham D."/>
            <person name="Erhart A."/>
            <person name="Billker O."/>
            <person name="Khan S.M."/>
            <person name="Stunnenberg H.G."/>
            <person name="Langhorne J."/>
            <person name="Holder A.A."/>
            <person name="Waters A.P."/>
            <person name="Newbold C.I."/>
            <person name="Pain A."/>
            <person name="Berriman M."/>
            <person name="Janse C.J."/>
        </authorList>
    </citation>
    <scope>NUCLEOTIDE SEQUENCE [LARGE SCALE GENOMIC DNA]</scope>
    <source>
        <strain evidence="10">ANKA</strain>
    </source>
</reference>
<reference evidence="8" key="2">
    <citation type="journal article" date="2020" name="PLoS Pathog.">
        <title>Overlapping and distinct roles of CDPK family members in the pre-erythrocytic stages of the rodent malaria parasite, Plasmodium berghei.</title>
        <authorList>
            <person name="Govindasamy K."/>
            <person name="Bhanot P."/>
        </authorList>
    </citation>
    <scope>FUNCTION</scope>
    <scope>DEVELOPMENTAL STAGE</scope>
    <scope>DISRUPTION PHENOTYPE</scope>
</reference>
<accession>A0A509AQE6</accession>
<proteinExistence type="evidence at protein level"/>
<sequence length="562" mass="65108">MCEHKANNKNDGEFVNLKEKNENNHCGNTKSTIADCDDDYSIITLCTKCLSTKTEVNKNKIILDSKALKDSRTKRRSSVNINIDILNNNLNLSPYFDRSQIVQETILMNNDDLEKLYELDKYKLGKGSYGNVVKAINKKTGQAKAIKIIDKKRINNIERLKREILIMKQMDHPNIIKLYEVYEDNEKLYLVLELCTGGELFDKIVKHGSFSEYETYKIMKQIFSALAYCHSKNIIHRDLKPENILYVDSSDDSPIQIIDWGFASKCMNNHNLKSVVGTPYYIAPEILKGKYDKKCDIWSSGVIMYILLCGYPPFNGKNNDDILKKVKKGEFVFDSNYWSKISLDAKELICECLNYNYKERIDVHKIVNHKWFIKFKNYNHITINKHLSKELIEKFKKFHKLCKIKKLAITCIAYQLNKKKFGKMKKTFEAFDHNGDGVLTISEIFQCLKVGDNEIDRDLYYLLKQLDTDGNGLIDYTEFLAACLDHSILEQDAVCRNAFKIFDANGDGIITKDELLNVLSFSNDQMPFSKEIIENVIKEVDANNDGYIDYDEFYKMMSGRQS</sequence>